<name>CH60_SALSV</name>
<protein>
    <recommendedName>
        <fullName evidence="1">Chaperonin GroEL</fullName>
        <ecNumber evidence="1">5.6.1.7</ecNumber>
    </recommendedName>
    <alternativeName>
        <fullName evidence="1">60 kDa chaperonin</fullName>
    </alternativeName>
    <alternativeName>
        <fullName evidence="1">Chaperonin-60</fullName>
        <shortName evidence="1">Cpn60</shortName>
    </alternativeName>
</protein>
<reference key="1">
    <citation type="journal article" date="2011" name="J. Bacteriol.">
        <title>Comparative genomics of 28 Salmonella enterica isolates: evidence for CRISPR-mediated adaptive sublineage evolution.</title>
        <authorList>
            <person name="Fricke W.F."/>
            <person name="Mammel M.K."/>
            <person name="McDermott P.F."/>
            <person name="Tartera C."/>
            <person name="White D.G."/>
            <person name="Leclerc J.E."/>
            <person name="Ravel J."/>
            <person name="Cebula T.A."/>
        </authorList>
    </citation>
    <scope>NUCLEOTIDE SEQUENCE [LARGE SCALE GENOMIC DNA]</scope>
    <source>
        <strain>CVM19633</strain>
    </source>
</reference>
<evidence type="ECO:0000255" key="1">
    <source>
        <dbReference type="HAMAP-Rule" id="MF_00600"/>
    </source>
</evidence>
<proteinExistence type="inferred from homology"/>
<feature type="chain" id="PRO_1000130057" description="Chaperonin GroEL">
    <location>
        <begin position="1"/>
        <end position="548"/>
    </location>
</feature>
<feature type="binding site" evidence="1">
    <location>
        <begin position="30"/>
        <end position="33"/>
    </location>
    <ligand>
        <name>ATP</name>
        <dbReference type="ChEBI" id="CHEBI:30616"/>
    </ligand>
</feature>
<feature type="binding site" evidence="1">
    <location>
        <position position="51"/>
    </location>
    <ligand>
        <name>ATP</name>
        <dbReference type="ChEBI" id="CHEBI:30616"/>
    </ligand>
</feature>
<feature type="binding site" evidence="1">
    <location>
        <begin position="87"/>
        <end position="91"/>
    </location>
    <ligand>
        <name>ATP</name>
        <dbReference type="ChEBI" id="CHEBI:30616"/>
    </ligand>
</feature>
<feature type="binding site" evidence="1">
    <location>
        <position position="415"/>
    </location>
    <ligand>
        <name>ATP</name>
        <dbReference type="ChEBI" id="CHEBI:30616"/>
    </ligand>
</feature>
<feature type="binding site" evidence="1">
    <location>
        <begin position="479"/>
        <end position="481"/>
    </location>
    <ligand>
        <name>ATP</name>
        <dbReference type="ChEBI" id="CHEBI:30616"/>
    </ligand>
</feature>
<feature type="binding site" evidence="1">
    <location>
        <position position="495"/>
    </location>
    <ligand>
        <name>ATP</name>
        <dbReference type="ChEBI" id="CHEBI:30616"/>
    </ligand>
</feature>
<gene>
    <name evidence="1" type="primary">groEL</name>
    <name evidence="1" type="synonym">groL</name>
    <name type="ordered locus">SeSA_A4600</name>
</gene>
<sequence>MAAKDVKFGNDARVKMLRGVNVLADAVKVTLGPKGRNVVLDKSFGAPTITKDGVSVAREIELEDKFENMGAQMVKEVASKANDAAGDGTTTATVLAQSIITEGLKAVAAGMNPMDLKRGIDKAVAAAVEELKALSVPCSDSKAIAQVGTISANSDETVGKLIAEAMDKVGKEGVITVEDGTGLQDELDVVEGMQFDRGYLSPYFINKPETGAVELESPFILLADKKISNIREMLPVLEAVAKAGKPLLIIAEDVEGEALATLVVNTMRGIVKVAAVKAPGFGDRRKAMLQDIATLTGGTVISEEIGMELEKATLEDLGQAKRVVINKDTTTIIDGVGEEAAIQGRVAQIRQQIEEATSDYDREKLQERVAKLAGGVAVIKVGAATEVEMKEKKARVEDALHATRAAVEEGVVAGGGVALIRVASKIADLKGQNEDQNVGIKVALRAMEAPLRQIVLNCGEEPSVVANTVKGGDGNYGYNAATEEYGNMIDMGILDPTKVTRSALQYAASVAGLMITTECMVTDLPKSDAPDLGAAGGMGGMGGMGGMM</sequence>
<keyword id="KW-0067">ATP-binding</keyword>
<keyword id="KW-0143">Chaperone</keyword>
<keyword id="KW-0963">Cytoplasm</keyword>
<keyword id="KW-0413">Isomerase</keyword>
<keyword id="KW-0547">Nucleotide-binding</keyword>
<comment type="function">
    <text evidence="1">Together with its co-chaperonin GroES, plays an essential role in assisting protein folding. The GroEL-GroES system forms a nano-cage that allows encapsulation of the non-native substrate proteins and provides a physical environment optimized to promote and accelerate protein folding.</text>
</comment>
<comment type="catalytic activity">
    <reaction evidence="1">
        <text>ATP + H2O + a folded polypeptide = ADP + phosphate + an unfolded polypeptide.</text>
        <dbReference type="EC" id="5.6.1.7"/>
    </reaction>
</comment>
<comment type="subunit">
    <text evidence="1">Forms a cylinder of 14 subunits composed of two heptameric rings stacked back-to-back. Interacts with the co-chaperonin GroES.</text>
</comment>
<comment type="subcellular location">
    <subcellularLocation>
        <location evidence="1">Cytoplasm</location>
    </subcellularLocation>
</comment>
<comment type="similarity">
    <text evidence="1">Belongs to the chaperonin (HSP60) family.</text>
</comment>
<accession>B4TSC6</accession>
<organism>
    <name type="scientific">Salmonella schwarzengrund (strain CVM19633)</name>
    <dbReference type="NCBI Taxonomy" id="439843"/>
    <lineage>
        <taxon>Bacteria</taxon>
        <taxon>Pseudomonadati</taxon>
        <taxon>Pseudomonadota</taxon>
        <taxon>Gammaproteobacteria</taxon>
        <taxon>Enterobacterales</taxon>
        <taxon>Enterobacteriaceae</taxon>
        <taxon>Salmonella</taxon>
    </lineage>
</organism>
<dbReference type="EC" id="5.6.1.7" evidence="1"/>
<dbReference type="EMBL" id="CP001127">
    <property type="protein sequence ID" value="ACF89847.1"/>
    <property type="molecule type" value="Genomic_DNA"/>
</dbReference>
<dbReference type="RefSeq" id="WP_000729126.1">
    <property type="nucleotide sequence ID" value="NC_011094.1"/>
</dbReference>
<dbReference type="SMR" id="B4TSC6"/>
<dbReference type="KEGG" id="sew:SeSA_A4600"/>
<dbReference type="HOGENOM" id="CLU_016503_3_0_6"/>
<dbReference type="Proteomes" id="UP000001865">
    <property type="component" value="Chromosome"/>
</dbReference>
<dbReference type="GO" id="GO:0005737">
    <property type="term" value="C:cytoplasm"/>
    <property type="evidence" value="ECO:0007669"/>
    <property type="project" value="UniProtKB-SubCell"/>
</dbReference>
<dbReference type="GO" id="GO:0005524">
    <property type="term" value="F:ATP binding"/>
    <property type="evidence" value="ECO:0007669"/>
    <property type="project" value="UniProtKB-UniRule"/>
</dbReference>
<dbReference type="GO" id="GO:0140662">
    <property type="term" value="F:ATP-dependent protein folding chaperone"/>
    <property type="evidence" value="ECO:0007669"/>
    <property type="project" value="InterPro"/>
</dbReference>
<dbReference type="GO" id="GO:0016853">
    <property type="term" value="F:isomerase activity"/>
    <property type="evidence" value="ECO:0007669"/>
    <property type="project" value="UniProtKB-KW"/>
</dbReference>
<dbReference type="GO" id="GO:0051082">
    <property type="term" value="F:unfolded protein binding"/>
    <property type="evidence" value="ECO:0007669"/>
    <property type="project" value="UniProtKB-UniRule"/>
</dbReference>
<dbReference type="GO" id="GO:0042026">
    <property type="term" value="P:protein refolding"/>
    <property type="evidence" value="ECO:0007669"/>
    <property type="project" value="UniProtKB-UniRule"/>
</dbReference>
<dbReference type="CDD" id="cd03344">
    <property type="entry name" value="GroEL"/>
    <property type="match status" value="1"/>
</dbReference>
<dbReference type="FunFam" id="1.10.560.10:FF:000001">
    <property type="entry name" value="60 kDa chaperonin"/>
    <property type="match status" value="1"/>
</dbReference>
<dbReference type="FunFam" id="3.50.7.10:FF:000001">
    <property type="entry name" value="60 kDa chaperonin"/>
    <property type="match status" value="1"/>
</dbReference>
<dbReference type="Gene3D" id="3.50.7.10">
    <property type="entry name" value="GroEL"/>
    <property type="match status" value="1"/>
</dbReference>
<dbReference type="Gene3D" id="1.10.560.10">
    <property type="entry name" value="GroEL-like equatorial domain"/>
    <property type="match status" value="1"/>
</dbReference>
<dbReference type="Gene3D" id="3.30.260.10">
    <property type="entry name" value="TCP-1-like chaperonin intermediate domain"/>
    <property type="match status" value="1"/>
</dbReference>
<dbReference type="HAMAP" id="MF_00600">
    <property type="entry name" value="CH60"/>
    <property type="match status" value="1"/>
</dbReference>
<dbReference type="InterPro" id="IPR018370">
    <property type="entry name" value="Chaperonin_Cpn60_CS"/>
</dbReference>
<dbReference type="InterPro" id="IPR001844">
    <property type="entry name" value="Cpn60/GroEL"/>
</dbReference>
<dbReference type="InterPro" id="IPR002423">
    <property type="entry name" value="Cpn60/GroEL/TCP-1"/>
</dbReference>
<dbReference type="InterPro" id="IPR027409">
    <property type="entry name" value="GroEL-like_apical_dom_sf"/>
</dbReference>
<dbReference type="InterPro" id="IPR027413">
    <property type="entry name" value="GROEL-like_equatorial_sf"/>
</dbReference>
<dbReference type="InterPro" id="IPR027410">
    <property type="entry name" value="TCP-1-like_intermed_sf"/>
</dbReference>
<dbReference type="NCBIfam" id="TIGR02348">
    <property type="entry name" value="GroEL"/>
    <property type="match status" value="1"/>
</dbReference>
<dbReference type="NCBIfam" id="NF000592">
    <property type="entry name" value="PRK00013.1"/>
    <property type="match status" value="1"/>
</dbReference>
<dbReference type="NCBIfam" id="NF009487">
    <property type="entry name" value="PRK12849.1"/>
    <property type="match status" value="1"/>
</dbReference>
<dbReference type="NCBIfam" id="NF009488">
    <property type="entry name" value="PRK12850.1"/>
    <property type="match status" value="1"/>
</dbReference>
<dbReference type="NCBIfam" id="NF009489">
    <property type="entry name" value="PRK12851.1"/>
    <property type="match status" value="1"/>
</dbReference>
<dbReference type="PANTHER" id="PTHR45633">
    <property type="entry name" value="60 KDA HEAT SHOCK PROTEIN, MITOCHONDRIAL"/>
    <property type="match status" value="1"/>
</dbReference>
<dbReference type="Pfam" id="PF00118">
    <property type="entry name" value="Cpn60_TCP1"/>
    <property type="match status" value="1"/>
</dbReference>
<dbReference type="PRINTS" id="PR00298">
    <property type="entry name" value="CHAPERONIN60"/>
</dbReference>
<dbReference type="SUPFAM" id="SSF52029">
    <property type="entry name" value="GroEL apical domain-like"/>
    <property type="match status" value="1"/>
</dbReference>
<dbReference type="SUPFAM" id="SSF48592">
    <property type="entry name" value="GroEL equatorial domain-like"/>
    <property type="match status" value="1"/>
</dbReference>
<dbReference type="SUPFAM" id="SSF54849">
    <property type="entry name" value="GroEL-intermediate domain like"/>
    <property type="match status" value="1"/>
</dbReference>
<dbReference type="PROSITE" id="PS00296">
    <property type="entry name" value="CHAPERONINS_CPN60"/>
    <property type="match status" value="1"/>
</dbReference>